<evidence type="ECO:0000250" key="1">
    <source>
        <dbReference type="UniProtKB" id="P00772"/>
    </source>
</evidence>
<evidence type="ECO:0000250" key="2">
    <source>
        <dbReference type="UniProtKB" id="Q91X79"/>
    </source>
</evidence>
<evidence type="ECO:0000255" key="3"/>
<evidence type="ECO:0000255" key="4">
    <source>
        <dbReference type="PROSITE-ProRule" id="PRU00274"/>
    </source>
</evidence>
<sequence>MLRFLVFATLVLYGHSTQDFPETNARVVGGTEAGRNSWPSQISLQYLSGGSWYHTCGGTLIRQNWVMTAAHCVDSPKTFRVVVGDHNLSQNDGTEQYVSVQKIVVHPYWNSNNVAAGYDIALLRLAQSVTLNSYVQLGVLPQEGAILANDSPCYITGWGRTKTNGQLAQTLQQAYLPSVDYAICSSSSYWGSTVKNTMVCAGGDGVHSGCQGDSGGPLHCLVNGKYSVHGVTSFVSKQGCNVSRKPTVFTRVSAYISWINKTIASN</sequence>
<feature type="signal peptide" evidence="1">
    <location>
        <begin position="1"/>
        <end position="16"/>
    </location>
</feature>
<feature type="propeptide" id="PRO_0000027679" description="Activation peptide" evidence="1">
    <location>
        <begin position="17"/>
        <end position="26"/>
    </location>
</feature>
<feature type="chain" id="PRO_0000027680" description="Chymotrypsin-like elastase family member 1">
    <location>
        <begin position="27"/>
        <end position="266"/>
    </location>
</feature>
<feature type="domain" description="Peptidase S1" evidence="4">
    <location>
        <begin position="27"/>
        <end position="264"/>
    </location>
</feature>
<feature type="active site" description="Charge relay system" evidence="1">
    <location>
        <position position="71"/>
    </location>
</feature>
<feature type="active site" description="Charge relay system" evidence="1">
    <location>
        <position position="119"/>
    </location>
</feature>
<feature type="active site" description="Charge relay system" evidence="1">
    <location>
        <position position="214"/>
    </location>
</feature>
<feature type="binding site" evidence="1">
    <location>
        <position position="85"/>
    </location>
    <ligand>
        <name>Ca(2+)</name>
        <dbReference type="ChEBI" id="CHEBI:29108"/>
    </ligand>
</feature>
<feature type="binding site" evidence="1">
    <location>
        <position position="87"/>
    </location>
    <ligand>
        <name>Ca(2+)</name>
        <dbReference type="ChEBI" id="CHEBI:29108"/>
    </ligand>
</feature>
<feature type="binding site" evidence="1">
    <location>
        <position position="90"/>
    </location>
    <ligand>
        <name>Ca(2+)</name>
        <dbReference type="ChEBI" id="CHEBI:29108"/>
    </ligand>
</feature>
<feature type="binding site" evidence="1">
    <location>
        <position position="95"/>
    </location>
    <ligand>
        <name>Ca(2+)</name>
        <dbReference type="ChEBI" id="CHEBI:29108"/>
    </ligand>
</feature>
<feature type="glycosylation site" description="N-linked (GlcNAc...) asparagine" evidence="3">
    <location>
        <position position="87"/>
    </location>
</feature>
<feature type="glycosylation site" description="N-linked (GlcNAc...) asparagine" evidence="3">
    <location>
        <position position="241"/>
    </location>
</feature>
<feature type="glycosylation site" description="N-linked (GlcNAc...) asparagine" evidence="3">
    <location>
        <position position="260"/>
    </location>
</feature>
<feature type="disulfide bond" evidence="4">
    <location>
        <begin position="56"/>
        <end position="72"/>
    </location>
</feature>
<feature type="disulfide bond" evidence="4">
    <location>
        <begin position="153"/>
        <end position="220"/>
    </location>
</feature>
<feature type="disulfide bond" evidence="4">
    <location>
        <begin position="184"/>
        <end position="200"/>
    </location>
</feature>
<feature type="disulfide bond" evidence="4">
    <location>
        <begin position="210"/>
        <end position="240"/>
    </location>
</feature>
<proteinExistence type="evidence at transcript level"/>
<dbReference type="EC" id="3.4.21.36"/>
<dbReference type="EMBL" id="X91400">
    <property type="protein sequence ID" value="CAA62746.1"/>
    <property type="molecule type" value="mRNA"/>
</dbReference>
<dbReference type="RefSeq" id="NP_001274631.1">
    <property type="nucleotide sequence ID" value="NM_001287702.1"/>
</dbReference>
<dbReference type="RefSeq" id="XP_045221205.1">
    <property type="nucleotide sequence ID" value="XM_045365270.2"/>
</dbReference>
<dbReference type="SMR" id="O46644"/>
<dbReference type="STRING" id="9541.ENSMFAP00000025971"/>
<dbReference type="MEROPS" id="S01.153"/>
<dbReference type="GlyCosmos" id="O46644">
    <property type="glycosylation" value="3 sites, No reported glycans"/>
</dbReference>
<dbReference type="Ensembl" id="ENSMFAT00000079626.1">
    <property type="protein sequence ID" value="ENSMFAP00000052468.1"/>
    <property type="gene ID" value="ENSMFAG00000044458.2"/>
</dbReference>
<dbReference type="GeneID" id="102139348"/>
<dbReference type="eggNOG" id="KOG3627">
    <property type="taxonomic scope" value="Eukaryota"/>
</dbReference>
<dbReference type="GeneTree" id="ENSGT01030000234528"/>
<dbReference type="Proteomes" id="UP000233100">
    <property type="component" value="Chromosome 11"/>
</dbReference>
<dbReference type="GO" id="GO:0005615">
    <property type="term" value="C:extracellular space"/>
    <property type="evidence" value="ECO:0007669"/>
    <property type="project" value="TreeGrafter"/>
</dbReference>
<dbReference type="GO" id="GO:0046872">
    <property type="term" value="F:metal ion binding"/>
    <property type="evidence" value="ECO:0007669"/>
    <property type="project" value="UniProtKB-KW"/>
</dbReference>
<dbReference type="GO" id="GO:0004252">
    <property type="term" value="F:serine-type endopeptidase activity"/>
    <property type="evidence" value="ECO:0000250"/>
    <property type="project" value="UniProtKB"/>
</dbReference>
<dbReference type="GO" id="GO:0060309">
    <property type="term" value="P:elastin catabolic process"/>
    <property type="evidence" value="ECO:0007669"/>
    <property type="project" value="Ensembl"/>
</dbReference>
<dbReference type="GO" id="GO:0031017">
    <property type="term" value="P:exocrine pancreas development"/>
    <property type="evidence" value="ECO:0007669"/>
    <property type="project" value="Ensembl"/>
</dbReference>
<dbReference type="GO" id="GO:0006954">
    <property type="term" value="P:inflammatory response"/>
    <property type="evidence" value="ECO:0007669"/>
    <property type="project" value="Ensembl"/>
</dbReference>
<dbReference type="GO" id="GO:0035264">
    <property type="term" value="P:multicellular organism growth"/>
    <property type="evidence" value="ECO:0007669"/>
    <property type="project" value="Ensembl"/>
</dbReference>
<dbReference type="GO" id="GO:0000122">
    <property type="term" value="P:negative regulation of transcription by RNA polymerase II"/>
    <property type="evidence" value="ECO:0007669"/>
    <property type="project" value="Ensembl"/>
</dbReference>
<dbReference type="GO" id="GO:0061113">
    <property type="term" value="P:pancreas morphogenesis"/>
    <property type="evidence" value="ECO:0007669"/>
    <property type="project" value="Ensembl"/>
</dbReference>
<dbReference type="GO" id="GO:0045766">
    <property type="term" value="P:positive regulation of angiogenesis"/>
    <property type="evidence" value="ECO:0007669"/>
    <property type="project" value="Ensembl"/>
</dbReference>
<dbReference type="GO" id="GO:0045944">
    <property type="term" value="P:positive regulation of transcription by RNA polymerase II"/>
    <property type="evidence" value="ECO:0007669"/>
    <property type="project" value="Ensembl"/>
</dbReference>
<dbReference type="GO" id="GO:0009791">
    <property type="term" value="P:post-embryonic development"/>
    <property type="evidence" value="ECO:0007669"/>
    <property type="project" value="Ensembl"/>
</dbReference>
<dbReference type="GO" id="GO:0006508">
    <property type="term" value="P:proteolysis"/>
    <property type="evidence" value="ECO:0007669"/>
    <property type="project" value="UniProtKB-KW"/>
</dbReference>
<dbReference type="GO" id="GO:0045595">
    <property type="term" value="P:regulation of cell differentiation"/>
    <property type="evidence" value="ECO:0007669"/>
    <property type="project" value="Ensembl"/>
</dbReference>
<dbReference type="GO" id="GO:0042127">
    <property type="term" value="P:regulation of cell population proliferation"/>
    <property type="evidence" value="ECO:0007669"/>
    <property type="project" value="Ensembl"/>
</dbReference>
<dbReference type="GO" id="GO:0048771">
    <property type="term" value="P:tissue remodeling"/>
    <property type="evidence" value="ECO:0007669"/>
    <property type="project" value="Ensembl"/>
</dbReference>
<dbReference type="GO" id="GO:0006366">
    <property type="term" value="P:transcription by RNA polymerase II"/>
    <property type="evidence" value="ECO:0007669"/>
    <property type="project" value="Ensembl"/>
</dbReference>
<dbReference type="GO" id="GO:0016055">
    <property type="term" value="P:Wnt signaling pathway"/>
    <property type="evidence" value="ECO:0007669"/>
    <property type="project" value="Ensembl"/>
</dbReference>
<dbReference type="CDD" id="cd00190">
    <property type="entry name" value="Tryp_SPc"/>
    <property type="match status" value="1"/>
</dbReference>
<dbReference type="FunFam" id="2.40.10.10:FF:000280">
    <property type="match status" value="1"/>
</dbReference>
<dbReference type="FunFam" id="2.40.10.10:FF:000122">
    <property type="entry name" value="Chymotrypsin-like elastase family member 1"/>
    <property type="match status" value="1"/>
</dbReference>
<dbReference type="Gene3D" id="2.40.10.10">
    <property type="entry name" value="Trypsin-like serine proteases"/>
    <property type="match status" value="2"/>
</dbReference>
<dbReference type="InterPro" id="IPR050850">
    <property type="entry name" value="Peptidase_S1_Elastase_sf"/>
</dbReference>
<dbReference type="InterPro" id="IPR009003">
    <property type="entry name" value="Peptidase_S1_PA"/>
</dbReference>
<dbReference type="InterPro" id="IPR043504">
    <property type="entry name" value="Peptidase_S1_PA_chymotrypsin"/>
</dbReference>
<dbReference type="InterPro" id="IPR001314">
    <property type="entry name" value="Peptidase_S1A"/>
</dbReference>
<dbReference type="InterPro" id="IPR001254">
    <property type="entry name" value="Trypsin_dom"/>
</dbReference>
<dbReference type="InterPro" id="IPR018114">
    <property type="entry name" value="TRYPSIN_HIS"/>
</dbReference>
<dbReference type="InterPro" id="IPR033116">
    <property type="entry name" value="TRYPSIN_SER"/>
</dbReference>
<dbReference type="PANTHER" id="PTHR24257">
    <property type="entry name" value="CHYMOTRYPSIN-LIKE ELASTASE FAMILY MEMBER"/>
    <property type="match status" value="1"/>
</dbReference>
<dbReference type="PANTHER" id="PTHR24257:SF0">
    <property type="entry name" value="CHYMOTRYPSIN-LIKE ELASTASE FAMILY MEMBER 1"/>
    <property type="match status" value="1"/>
</dbReference>
<dbReference type="Pfam" id="PF00089">
    <property type="entry name" value="Trypsin"/>
    <property type="match status" value="1"/>
</dbReference>
<dbReference type="PRINTS" id="PR00722">
    <property type="entry name" value="CHYMOTRYPSIN"/>
</dbReference>
<dbReference type="SMART" id="SM00020">
    <property type="entry name" value="Tryp_SPc"/>
    <property type="match status" value="1"/>
</dbReference>
<dbReference type="SUPFAM" id="SSF50494">
    <property type="entry name" value="Trypsin-like serine proteases"/>
    <property type="match status" value="1"/>
</dbReference>
<dbReference type="PROSITE" id="PS50240">
    <property type="entry name" value="TRYPSIN_DOM"/>
    <property type="match status" value="1"/>
</dbReference>
<dbReference type="PROSITE" id="PS00134">
    <property type="entry name" value="TRYPSIN_HIS"/>
    <property type="match status" value="1"/>
</dbReference>
<dbReference type="PROSITE" id="PS00135">
    <property type="entry name" value="TRYPSIN_SER"/>
    <property type="match status" value="1"/>
</dbReference>
<organism>
    <name type="scientific">Macaca fascicularis</name>
    <name type="common">Crab-eating macaque</name>
    <name type="synonym">Cynomolgus monkey</name>
    <dbReference type="NCBI Taxonomy" id="9541"/>
    <lineage>
        <taxon>Eukaryota</taxon>
        <taxon>Metazoa</taxon>
        <taxon>Chordata</taxon>
        <taxon>Craniata</taxon>
        <taxon>Vertebrata</taxon>
        <taxon>Euteleostomi</taxon>
        <taxon>Mammalia</taxon>
        <taxon>Eutheria</taxon>
        <taxon>Euarchontoglires</taxon>
        <taxon>Primates</taxon>
        <taxon>Haplorrhini</taxon>
        <taxon>Catarrhini</taxon>
        <taxon>Cercopithecidae</taxon>
        <taxon>Cercopithecinae</taxon>
        <taxon>Macaca</taxon>
    </lineage>
</organism>
<accession>O46644</accession>
<protein>
    <recommendedName>
        <fullName>Chymotrypsin-like elastase family member 1</fullName>
        <ecNumber>3.4.21.36</ecNumber>
    </recommendedName>
    <alternativeName>
        <fullName>Elastase-1</fullName>
    </alternativeName>
</protein>
<gene>
    <name type="primary">CELA1</name>
    <name type="synonym">ELA1</name>
</gene>
<reference key="1">
    <citation type="submission" date="1995-08" db="EMBL/GenBank/DDBJ databases">
        <authorList>
            <person name="Kawashima I."/>
        </authorList>
    </citation>
    <scope>NUCLEOTIDE SEQUENCE [MRNA]</scope>
</reference>
<name>CELA1_MACFA</name>
<keyword id="KW-0106">Calcium</keyword>
<keyword id="KW-1015">Disulfide bond</keyword>
<keyword id="KW-0325">Glycoprotein</keyword>
<keyword id="KW-0378">Hydrolase</keyword>
<keyword id="KW-0479">Metal-binding</keyword>
<keyword id="KW-0645">Protease</keyword>
<keyword id="KW-1185">Reference proteome</keyword>
<keyword id="KW-0964">Secreted</keyword>
<keyword id="KW-0720">Serine protease</keyword>
<keyword id="KW-0732">Signal</keyword>
<keyword id="KW-0865">Zymogen</keyword>
<comment type="function">
    <text evidence="2">Serine proteases that hydrolyze many proteins in addition to elastin.</text>
</comment>
<comment type="catalytic activity">
    <reaction evidence="2">
        <text>Hydrolysis of proteins, including elastin. Preferential cleavage: Ala-|-Xaa.</text>
        <dbReference type="EC" id="3.4.21.36"/>
    </reaction>
</comment>
<comment type="cofactor">
    <cofactor evidence="1">
        <name>Ca(2+)</name>
        <dbReference type="ChEBI" id="CHEBI:29108"/>
    </cofactor>
    <text evidence="1">Binds 1 Ca(2+) ion per subunit.</text>
</comment>
<comment type="subcellular location">
    <subcellularLocation>
        <location evidence="1">Secreted</location>
    </subcellularLocation>
</comment>
<comment type="similarity">
    <text evidence="4">Belongs to the peptidase S1 family. Elastase subfamily.</text>
</comment>